<gene>
    <name type="primary">ACA2</name>
    <name type="ordered locus">At4g37640</name>
    <name type="ORF">F19F18.130</name>
</gene>
<reference key="1">
    <citation type="journal article" date="1998" name="J. Biol. Chem.">
        <title>A novel calmodulin-regulated Ca2+-ATPase (ACA2) from Arabidopsis with an N-terminal autoinhibitory domain.</title>
        <authorList>
            <person name="Harper J.F."/>
            <person name="Hong B."/>
            <person name="Hwang I."/>
            <person name="Guo H.Q."/>
            <person name="Stoddard R."/>
            <person name="Huang J.F."/>
            <person name="Palmgren M.G."/>
            <person name="Sze H."/>
        </authorList>
    </citation>
    <scope>NUCLEOTIDE SEQUENCE [MRNA]</scope>
    <scope>CALMODULIN-BINDING DOMAIN</scope>
    <source>
        <strain>cv. Columbia</strain>
    </source>
</reference>
<reference key="2">
    <citation type="journal article" date="1999" name="Nature">
        <title>Sequence and analysis of chromosome 4 of the plant Arabidopsis thaliana.</title>
        <authorList>
            <person name="Mayer K.F.X."/>
            <person name="Schueller C."/>
            <person name="Wambutt R."/>
            <person name="Murphy G."/>
            <person name="Volckaert G."/>
            <person name="Pohl T."/>
            <person name="Duesterhoeft A."/>
            <person name="Stiekema W."/>
            <person name="Entian K.-D."/>
            <person name="Terryn N."/>
            <person name="Harris B."/>
            <person name="Ansorge W."/>
            <person name="Brandt P."/>
            <person name="Grivell L.A."/>
            <person name="Rieger M."/>
            <person name="Weichselgartner M."/>
            <person name="de Simone V."/>
            <person name="Obermaier B."/>
            <person name="Mache R."/>
            <person name="Mueller M."/>
            <person name="Kreis M."/>
            <person name="Delseny M."/>
            <person name="Puigdomenech P."/>
            <person name="Watson M."/>
            <person name="Schmidtheini T."/>
            <person name="Reichert B."/>
            <person name="Portetelle D."/>
            <person name="Perez-Alonso M."/>
            <person name="Boutry M."/>
            <person name="Bancroft I."/>
            <person name="Vos P."/>
            <person name="Hoheisel J."/>
            <person name="Zimmermann W."/>
            <person name="Wedler H."/>
            <person name="Ridley P."/>
            <person name="Langham S.-A."/>
            <person name="McCullagh B."/>
            <person name="Bilham L."/>
            <person name="Robben J."/>
            <person name="van der Schueren J."/>
            <person name="Grymonprez B."/>
            <person name="Chuang Y.-J."/>
            <person name="Vandenbussche F."/>
            <person name="Braeken M."/>
            <person name="Weltjens I."/>
            <person name="Voet M."/>
            <person name="Bastiaens I."/>
            <person name="Aert R."/>
            <person name="Defoor E."/>
            <person name="Weitzenegger T."/>
            <person name="Bothe G."/>
            <person name="Ramsperger U."/>
            <person name="Hilbert H."/>
            <person name="Braun M."/>
            <person name="Holzer E."/>
            <person name="Brandt A."/>
            <person name="Peters S."/>
            <person name="van Staveren M."/>
            <person name="Dirkse W."/>
            <person name="Mooijman P."/>
            <person name="Klein Lankhorst R."/>
            <person name="Rose M."/>
            <person name="Hauf J."/>
            <person name="Koetter P."/>
            <person name="Berneiser S."/>
            <person name="Hempel S."/>
            <person name="Feldpausch M."/>
            <person name="Lamberth S."/>
            <person name="Van den Daele H."/>
            <person name="De Keyser A."/>
            <person name="Buysshaert C."/>
            <person name="Gielen J."/>
            <person name="Villarroel R."/>
            <person name="De Clercq R."/>
            <person name="van Montagu M."/>
            <person name="Rogers J."/>
            <person name="Cronin A."/>
            <person name="Quail M.A."/>
            <person name="Bray-Allen S."/>
            <person name="Clark L."/>
            <person name="Doggett J."/>
            <person name="Hall S."/>
            <person name="Kay M."/>
            <person name="Lennard N."/>
            <person name="McLay K."/>
            <person name="Mayes R."/>
            <person name="Pettett A."/>
            <person name="Rajandream M.A."/>
            <person name="Lyne M."/>
            <person name="Benes V."/>
            <person name="Rechmann S."/>
            <person name="Borkova D."/>
            <person name="Bloecker H."/>
            <person name="Scharfe M."/>
            <person name="Grimm M."/>
            <person name="Loehnert T.-H."/>
            <person name="Dose S."/>
            <person name="de Haan M."/>
            <person name="Maarse A.C."/>
            <person name="Schaefer M."/>
            <person name="Mueller-Auer S."/>
            <person name="Gabel C."/>
            <person name="Fuchs M."/>
            <person name="Fartmann B."/>
            <person name="Granderath K."/>
            <person name="Dauner D."/>
            <person name="Herzl A."/>
            <person name="Neumann S."/>
            <person name="Argiriou A."/>
            <person name="Vitale D."/>
            <person name="Liguori R."/>
            <person name="Piravandi E."/>
            <person name="Massenet O."/>
            <person name="Quigley F."/>
            <person name="Clabauld G."/>
            <person name="Muendlein A."/>
            <person name="Felber R."/>
            <person name="Schnabl S."/>
            <person name="Hiller R."/>
            <person name="Schmidt W."/>
            <person name="Lecharny A."/>
            <person name="Aubourg S."/>
            <person name="Chefdor F."/>
            <person name="Cooke R."/>
            <person name="Berger C."/>
            <person name="Monfort A."/>
            <person name="Casacuberta E."/>
            <person name="Gibbons T."/>
            <person name="Weber N."/>
            <person name="Vandenbol M."/>
            <person name="Bargues M."/>
            <person name="Terol J."/>
            <person name="Torres A."/>
            <person name="Perez-Perez A."/>
            <person name="Purnelle B."/>
            <person name="Bent E."/>
            <person name="Johnson S."/>
            <person name="Tacon D."/>
            <person name="Jesse T."/>
            <person name="Heijnen L."/>
            <person name="Schwarz S."/>
            <person name="Scholler P."/>
            <person name="Heber S."/>
            <person name="Francs P."/>
            <person name="Bielke C."/>
            <person name="Frishman D."/>
            <person name="Haase D."/>
            <person name="Lemcke K."/>
            <person name="Mewes H.-W."/>
            <person name="Stocker S."/>
            <person name="Zaccaria P."/>
            <person name="Bevan M."/>
            <person name="Wilson R.K."/>
            <person name="de la Bastide M."/>
            <person name="Habermann K."/>
            <person name="Parnell L."/>
            <person name="Dedhia N."/>
            <person name="Gnoj L."/>
            <person name="Schutz K."/>
            <person name="Huang E."/>
            <person name="Spiegel L."/>
            <person name="Sekhon M."/>
            <person name="Murray J."/>
            <person name="Sheet P."/>
            <person name="Cordes M."/>
            <person name="Abu-Threideh J."/>
            <person name="Stoneking T."/>
            <person name="Kalicki J."/>
            <person name="Graves T."/>
            <person name="Harmon G."/>
            <person name="Edwards J."/>
            <person name="Latreille P."/>
            <person name="Courtney L."/>
            <person name="Cloud J."/>
            <person name="Abbott A."/>
            <person name="Scott K."/>
            <person name="Johnson D."/>
            <person name="Minx P."/>
            <person name="Bentley D."/>
            <person name="Fulton B."/>
            <person name="Miller N."/>
            <person name="Greco T."/>
            <person name="Kemp K."/>
            <person name="Kramer J."/>
            <person name="Fulton L."/>
            <person name="Mardis E."/>
            <person name="Dante M."/>
            <person name="Pepin K."/>
            <person name="Hillier L.W."/>
            <person name="Nelson J."/>
            <person name="Spieth J."/>
            <person name="Ryan E."/>
            <person name="Andrews S."/>
            <person name="Geisel C."/>
            <person name="Layman D."/>
            <person name="Du H."/>
            <person name="Ali J."/>
            <person name="Berghoff A."/>
            <person name="Jones K."/>
            <person name="Drone K."/>
            <person name="Cotton M."/>
            <person name="Joshu C."/>
            <person name="Antonoiu B."/>
            <person name="Zidanic M."/>
            <person name="Strong C."/>
            <person name="Sun H."/>
            <person name="Lamar B."/>
            <person name="Yordan C."/>
            <person name="Ma P."/>
            <person name="Zhong J."/>
            <person name="Preston R."/>
            <person name="Vil D."/>
            <person name="Shekher M."/>
            <person name="Matero A."/>
            <person name="Shah R."/>
            <person name="Swaby I.K."/>
            <person name="O'Shaughnessy A."/>
            <person name="Rodriguez M."/>
            <person name="Hoffman J."/>
            <person name="Till S."/>
            <person name="Granat S."/>
            <person name="Shohdy N."/>
            <person name="Hasegawa A."/>
            <person name="Hameed A."/>
            <person name="Lodhi M."/>
            <person name="Johnson A."/>
            <person name="Chen E."/>
            <person name="Marra M.A."/>
            <person name="Martienssen R."/>
            <person name="McCombie W.R."/>
        </authorList>
    </citation>
    <scope>NUCLEOTIDE SEQUENCE [LARGE SCALE GENOMIC DNA]</scope>
    <source>
        <strain>cv. Columbia</strain>
    </source>
</reference>
<reference key="3">
    <citation type="journal article" date="2017" name="Plant J.">
        <title>Araport11: a complete reannotation of the Arabidopsis thaliana reference genome.</title>
        <authorList>
            <person name="Cheng C.Y."/>
            <person name="Krishnakumar V."/>
            <person name="Chan A.P."/>
            <person name="Thibaud-Nissen F."/>
            <person name="Schobel S."/>
            <person name="Town C.D."/>
        </authorList>
    </citation>
    <scope>GENOME REANNOTATION</scope>
    <source>
        <strain>cv. Columbia</strain>
    </source>
</reference>
<reference key="4">
    <citation type="journal article" date="2003" name="Science">
        <title>Empirical analysis of transcriptional activity in the Arabidopsis genome.</title>
        <authorList>
            <person name="Yamada K."/>
            <person name="Lim J."/>
            <person name="Dale J.M."/>
            <person name="Chen H."/>
            <person name="Shinn P."/>
            <person name="Palm C.J."/>
            <person name="Southwick A.M."/>
            <person name="Wu H.C."/>
            <person name="Kim C.J."/>
            <person name="Nguyen M."/>
            <person name="Pham P.K."/>
            <person name="Cheuk R.F."/>
            <person name="Karlin-Newmann G."/>
            <person name="Liu S.X."/>
            <person name="Lam B."/>
            <person name="Sakano H."/>
            <person name="Wu T."/>
            <person name="Yu G."/>
            <person name="Miranda M."/>
            <person name="Quach H.L."/>
            <person name="Tripp M."/>
            <person name="Chang C.H."/>
            <person name="Lee J.M."/>
            <person name="Toriumi M.J."/>
            <person name="Chan M.M."/>
            <person name="Tang C.C."/>
            <person name="Onodera C.S."/>
            <person name="Deng J.M."/>
            <person name="Akiyama K."/>
            <person name="Ansari Y."/>
            <person name="Arakawa T."/>
            <person name="Banh J."/>
            <person name="Banno F."/>
            <person name="Bowser L."/>
            <person name="Brooks S.Y."/>
            <person name="Carninci P."/>
            <person name="Chao Q."/>
            <person name="Choy N."/>
            <person name="Enju A."/>
            <person name="Goldsmith A.D."/>
            <person name="Gurjal M."/>
            <person name="Hansen N.F."/>
            <person name="Hayashizaki Y."/>
            <person name="Johnson-Hopson C."/>
            <person name="Hsuan V.W."/>
            <person name="Iida K."/>
            <person name="Karnes M."/>
            <person name="Khan S."/>
            <person name="Koesema E."/>
            <person name="Ishida J."/>
            <person name="Jiang P.X."/>
            <person name="Jones T."/>
            <person name="Kawai J."/>
            <person name="Kamiya A."/>
            <person name="Meyers C."/>
            <person name="Nakajima M."/>
            <person name="Narusaka M."/>
            <person name="Seki M."/>
            <person name="Sakurai T."/>
            <person name="Satou M."/>
            <person name="Tamse R."/>
            <person name="Vaysberg M."/>
            <person name="Wallender E.K."/>
            <person name="Wong C."/>
            <person name="Yamamura Y."/>
            <person name="Yuan S."/>
            <person name="Shinozaki K."/>
            <person name="Davis R.W."/>
            <person name="Theologis A."/>
            <person name="Ecker J.R."/>
        </authorList>
    </citation>
    <scope>NUCLEOTIDE SEQUENCE [LARGE SCALE MRNA]</scope>
    <source>
        <strain>cv. Columbia</strain>
    </source>
</reference>
<reference key="5">
    <citation type="journal article" date="2000" name="Proc. Natl. Acad. Sci. U.S.A.">
        <title>A calcium-dependent protein kinase can inhibit a calmodulin-stimulated Ca2+ pump (ACA2) located in the endoplasmic reticulum of Arabidopsis.</title>
        <authorList>
            <person name="Hwang I."/>
            <person name="Sze H."/>
            <person name="Harper J.F."/>
        </authorList>
    </citation>
    <scope>PHOSPHORYLATION AT SER-45 BY CPK1</scope>
</reference>
<reference key="6">
    <citation type="journal article" date="2012" name="Mol. Cell. Proteomics">
        <title>Comparative large-scale characterisation of plant vs. mammal proteins reveals similar and idiosyncratic N-alpha acetylation features.</title>
        <authorList>
            <person name="Bienvenut W.V."/>
            <person name="Sumpton D."/>
            <person name="Martinez A."/>
            <person name="Lilla S."/>
            <person name="Espagne C."/>
            <person name="Meinnel T."/>
            <person name="Giglione C."/>
        </authorList>
    </citation>
    <scope>ACETYLATION [LARGE SCALE ANALYSIS] AT MET-1</scope>
    <scope>IDENTIFICATION BY MASS SPECTROMETRY [LARGE SCALE ANALYSIS]</scope>
</reference>
<name>ACA2_ARATH</name>
<keyword id="KW-0002">3D-structure</keyword>
<keyword id="KW-0007">Acetylation</keyword>
<keyword id="KW-0067">ATP-binding</keyword>
<keyword id="KW-0106">Calcium</keyword>
<keyword id="KW-0109">Calcium transport</keyword>
<keyword id="KW-0112">Calmodulin-binding</keyword>
<keyword id="KW-0256">Endoplasmic reticulum</keyword>
<keyword id="KW-0406">Ion transport</keyword>
<keyword id="KW-0460">Magnesium</keyword>
<keyword id="KW-0472">Membrane</keyword>
<keyword id="KW-0479">Metal-binding</keyword>
<keyword id="KW-0547">Nucleotide-binding</keyword>
<keyword id="KW-0597">Phosphoprotein</keyword>
<keyword id="KW-1185">Reference proteome</keyword>
<keyword id="KW-1278">Translocase</keyword>
<keyword id="KW-0812">Transmembrane</keyword>
<keyword id="KW-1133">Transmembrane helix</keyword>
<keyword id="KW-0813">Transport</keyword>
<accession>O81108</accession>
<comment type="function">
    <text>This magnesium-dependent enzyme catalyzes the hydrolysis of ATP coupled with the translocation of calcium from the cytosol into the endoplasmic reticulum.</text>
</comment>
<comment type="catalytic activity">
    <reaction>
        <text>Ca(2+)(in) + ATP + H2O = Ca(2+)(out) + ADP + phosphate + H(+)</text>
        <dbReference type="Rhea" id="RHEA:18105"/>
        <dbReference type="ChEBI" id="CHEBI:15377"/>
        <dbReference type="ChEBI" id="CHEBI:15378"/>
        <dbReference type="ChEBI" id="CHEBI:29108"/>
        <dbReference type="ChEBI" id="CHEBI:30616"/>
        <dbReference type="ChEBI" id="CHEBI:43474"/>
        <dbReference type="ChEBI" id="CHEBI:456216"/>
        <dbReference type="EC" id="7.2.2.10"/>
    </reaction>
</comment>
<comment type="activity regulation">
    <text>Activated by calmodulin.</text>
</comment>
<comment type="subcellular location">
    <subcellularLocation>
        <location>Endoplasmic reticulum membrane</location>
        <topology>Multi-pass membrane protein</topology>
    </subcellularLocation>
</comment>
<comment type="domain">
    <text>The N-terminus contains an autoinhibitory calmodulin-binding domain, which binds calmodulin in a calcium-dependent fashion.</text>
</comment>
<comment type="similarity">
    <text evidence="4">Belongs to the cation transport ATPase (P-type) (TC 3.A.3) family. Type IIB subfamily.</text>
</comment>
<organism>
    <name type="scientific">Arabidopsis thaliana</name>
    <name type="common">Mouse-ear cress</name>
    <dbReference type="NCBI Taxonomy" id="3702"/>
    <lineage>
        <taxon>Eukaryota</taxon>
        <taxon>Viridiplantae</taxon>
        <taxon>Streptophyta</taxon>
        <taxon>Embryophyta</taxon>
        <taxon>Tracheophyta</taxon>
        <taxon>Spermatophyta</taxon>
        <taxon>Magnoliopsida</taxon>
        <taxon>eudicotyledons</taxon>
        <taxon>Gunneridae</taxon>
        <taxon>Pentapetalae</taxon>
        <taxon>rosids</taxon>
        <taxon>malvids</taxon>
        <taxon>Brassicales</taxon>
        <taxon>Brassicaceae</taxon>
        <taxon>Camelineae</taxon>
        <taxon>Arabidopsis</taxon>
    </lineage>
</organism>
<dbReference type="EC" id="7.2.2.10"/>
<dbReference type="EMBL" id="AF025842">
    <property type="protein sequence ID" value="AAC26997.1"/>
    <property type="molecule type" value="mRNA"/>
</dbReference>
<dbReference type="EMBL" id="AL035605">
    <property type="protein sequence ID" value="CAB38303.1"/>
    <property type="molecule type" value="Genomic_DNA"/>
</dbReference>
<dbReference type="EMBL" id="AL161591">
    <property type="protein sequence ID" value="CAB80429.1"/>
    <property type="molecule type" value="Genomic_DNA"/>
</dbReference>
<dbReference type="EMBL" id="CP002687">
    <property type="protein sequence ID" value="AEE86819.1"/>
    <property type="molecule type" value="Genomic_DNA"/>
</dbReference>
<dbReference type="EMBL" id="AY062484">
    <property type="protein sequence ID" value="AAL32562.1"/>
    <property type="molecule type" value="mRNA"/>
</dbReference>
<dbReference type="PIR" id="T04721">
    <property type="entry name" value="T04721"/>
</dbReference>
<dbReference type="RefSeq" id="NP_195479.1">
    <property type="nucleotide sequence ID" value="NM_119927.3"/>
</dbReference>
<dbReference type="PDB" id="2M7E">
    <property type="method" value="NMR"/>
    <property type="chains" value="A=20-45"/>
</dbReference>
<dbReference type="PDBsum" id="2M7E"/>
<dbReference type="BMRB" id="O81108"/>
<dbReference type="SMR" id="O81108"/>
<dbReference type="BioGRID" id="15199">
    <property type="interactions" value="6"/>
</dbReference>
<dbReference type="FunCoup" id="O81108">
    <property type="interactions" value="3171"/>
</dbReference>
<dbReference type="IntAct" id="O81108">
    <property type="interactions" value="3"/>
</dbReference>
<dbReference type="STRING" id="3702.O81108"/>
<dbReference type="TCDB" id="3.A.3.2.12">
    <property type="family name" value="the p-type atpase (p-atpase) superfamily"/>
</dbReference>
<dbReference type="iPTMnet" id="O81108"/>
<dbReference type="PaxDb" id="3702-AT4G37640.1"/>
<dbReference type="ProteomicsDB" id="244631"/>
<dbReference type="EnsemblPlants" id="AT4G37640.1">
    <property type="protein sequence ID" value="AT4G37640.1"/>
    <property type="gene ID" value="AT4G37640"/>
</dbReference>
<dbReference type="GeneID" id="829918"/>
<dbReference type="Gramene" id="AT4G37640.1">
    <property type="protein sequence ID" value="AT4G37640.1"/>
    <property type="gene ID" value="AT4G37640"/>
</dbReference>
<dbReference type="KEGG" id="ath:AT4G37640"/>
<dbReference type="Araport" id="AT4G37640"/>
<dbReference type="TAIR" id="AT4G37640">
    <property type="gene designation" value="ACA2"/>
</dbReference>
<dbReference type="eggNOG" id="KOG0204">
    <property type="taxonomic scope" value="Eukaryota"/>
</dbReference>
<dbReference type="HOGENOM" id="CLU_002360_9_2_1"/>
<dbReference type="InParanoid" id="O81108"/>
<dbReference type="OMA" id="ISIPWGA"/>
<dbReference type="OrthoDB" id="3352408at2759"/>
<dbReference type="PhylomeDB" id="O81108"/>
<dbReference type="BioCyc" id="ARA:AT4G37640-MONOMER"/>
<dbReference type="BioCyc" id="MetaCyc:MONOMER-14659"/>
<dbReference type="EvolutionaryTrace" id="O81108"/>
<dbReference type="PRO" id="PR:O81108"/>
<dbReference type="Proteomes" id="UP000006548">
    <property type="component" value="Chromosome 4"/>
</dbReference>
<dbReference type="ExpressionAtlas" id="O81108">
    <property type="expression patterns" value="baseline and differential"/>
</dbReference>
<dbReference type="GO" id="GO:0005783">
    <property type="term" value="C:endoplasmic reticulum"/>
    <property type="evidence" value="ECO:0007005"/>
    <property type="project" value="TAIR"/>
</dbReference>
<dbReference type="GO" id="GO:0005789">
    <property type="term" value="C:endoplasmic reticulum membrane"/>
    <property type="evidence" value="ECO:0000314"/>
    <property type="project" value="TAIR"/>
</dbReference>
<dbReference type="GO" id="GO:0016020">
    <property type="term" value="C:membrane"/>
    <property type="evidence" value="ECO:0000314"/>
    <property type="project" value="TAIR"/>
</dbReference>
<dbReference type="GO" id="GO:0005524">
    <property type="term" value="F:ATP binding"/>
    <property type="evidence" value="ECO:0007669"/>
    <property type="project" value="UniProtKB-KW"/>
</dbReference>
<dbReference type="GO" id="GO:0016887">
    <property type="term" value="F:ATP hydrolysis activity"/>
    <property type="evidence" value="ECO:0007669"/>
    <property type="project" value="InterPro"/>
</dbReference>
<dbReference type="GO" id="GO:0015085">
    <property type="term" value="F:calcium ion transmembrane transporter activity"/>
    <property type="evidence" value="ECO:0000314"/>
    <property type="project" value="TAIR"/>
</dbReference>
<dbReference type="GO" id="GO:0005516">
    <property type="term" value="F:calmodulin binding"/>
    <property type="evidence" value="ECO:0000314"/>
    <property type="project" value="TAIR"/>
</dbReference>
<dbReference type="GO" id="GO:0046872">
    <property type="term" value="F:metal ion binding"/>
    <property type="evidence" value="ECO:0007669"/>
    <property type="project" value="UniProtKB-KW"/>
</dbReference>
<dbReference type="GO" id="GO:0005388">
    <property type="term" value="F:P-type calcium transporter activity"/>
    <property type="evidence" value="ECO:0000314"/>
    <property type="project" value="TAIR"/>
</dbReference>
<dbReference type="GO" id="GO:0070588">
    <property type="term" value="P:calcium ion transmembrane transport"/>
    <property type="evidence" value="ECO:0000314"/>
    <property type="project" value="TAIR"/>
</dbReference>
<dbReference type="CDD" id="cd02081">
    <property type="entry name" value="P-type_ATPase_Ca_PMCA-like"/>
    <property type="match status" value="1"/>
</dbReference>
<dbReference type="FunFam" id="1.20.1110.10:FF:000039">
    <property type="entry name" value="Calcium-transporting ATPase"/>
    <property type="match status" value="1"/>
</dbReference>
<dbReference type="FunFam" id="1.20.5.170:FF:000026">
    <property type="entry name" value="Calcium-transporting ATPase"/>
    <property type="match status" value="1"/>
</dbReference>
<dbReference type="FunFam" id="2.70.150.10:FF:000006">
    <property type="entry name" value="Calcium-transporting ATPase"/>
    <property type="match status" value="1"/>
</dbReference>
<dbReference type="FunFam" id="3.40.1110.10:FF:000011">
    <property type="entry name" value="Calcium-transporting ATPase"/>
    <property type="match status" value="1"/>
</dbReference>
<dbReference type="FunFam" id="3.40.50.1000:FF:000011">
    <property type="entry name" value="Calcium-transporting ATPase"/>
    <property type="match status" value="1"/>
</dbReference>
<dbReference type="Gene3D" id="1.20.5.170">
    <property type="match status" value="1"/>
</dbReference>
<dbReference type="Gene3D" id="3.40.1110.10">
    <property type="entry name" value="Calcium-transporting ATPase, cytoplasmic domain N"/>
    <property type="match status" value="1"/>
</dbReference>
<dbReference type="Gene3D" id="2.70.150.10">
    <property type="entry name" value="Calcium-transporting ATPase, cytoplasmic transduction domain A"/>
    <property type="match status" value="1"/>
</dbReference>
<dbReference type="Gene3D" id="1.20.1110.10">
    <property type="entry name" value="Calcium-transporting ATPase, transmembrane domain"/>
    <property type="match status" value="1"/>
</dbReference>
<dbReference type="Gene3D" id="3.40.50.1000">
    <property type="entry name" value="HAD superfamily/HAD-like"/>
    <property type="match status" value="1"/>
</dbReference>
<dbReference type="InterPro" id="IPR006068">
    <property type="entry name" value="ATPase_P-typ_cation-transptr_C"/>
</dbReference>
<dbReference type="InterPro" id="IPR004014">
    <property type="entry name" value="ATPase_P-typ_cation-transptr_N"/>
</dbReference>
<dbReference type="InterPro" id="IPR023299">
    <property type="entry name" value="ATPase_P-typ_cyto_dom_N"/>
</dbReference>
<dbReference type="InterPro" id="IPR018303">
    <property type="entry name" value="ATPase_P-typ_P_site"/>
</dbReference>
<dbReference type="InterPro" id="IPR023298">
    <property type="entry name" value="ATPase_P-typ_TM_dom_sf"/>
</dbReference>
<dbReference type="InterPro" id="IPR008250">
    <property type="entry name" value="ATPase_P-typ_transduc_dom_A_sf"/>
</dbReference>
<dbReference type="InterPro" id="IPR024750">
    <property type="entry name" value="Ca_ATPase_N_dom"/>
</dbReference>
<dbReference type="InterPro" id="IPR036412">
    <property type="entry name" value="HAD-like_sf"/>
</dbReference>
<dbReference type="InterPro" id="IPR023214">
    <property type="entry name" value="HAD_sf"/>
</dbReference>
<dbReference type="InterPro" id="IPR006408">
    <property type="entry name" value="P-type_ATPase_IIB"/>
</dbReference>
<dbReference type="InterPro" id="IPR001757">
    <property type="entry name" value="P_typ_ATPase"/>
</dbReference>
<dbReference type="InterPro" id="IPR044492">
    <property type="entry name" value="P_typ_ATPase_HD_dom"/>
</dbReference>
<dbReference type="NCBIfam" id="TIGR01517">
    <property type="entry name" value="ATPase-IIB_Ca"/>
    <property type="match status" value="1"/>
</dbReference>
<dbReference type="NCBIfam" id="TIGR01494">
    <property type="entry name" value="ATPase_P-type"/>
    <property type="match status" value="3"/>
</dbReference>
<dbReference type="PANTHER" id="PTHR24093:SF474">
    <property type="entry name" value="CALCIUM-TRANSPORTING ATPASE 2, PLASMA MEMBRANE-TYPE"/>
    <property type="match status" value="1"/>
</dbReference>
<dbReference type="PANTHER" id="PTHR24093">
    <property type="entry name" value="CATION TRANSPORTING ATPASE"/>
    <property type="match status" value="1"/>
</dbReference>
<dbReference type="Pfam" id="PF12515">
    <property type="entry name" value="CaATP_NAI"/>
    <property type="match status" value="1"/>
</dbReference>
<dbReference type="Pfam" id="PF13246">
    <property type="entry name" value="Cation_ATPase"/>
    <property type="match status" value="1"/>
</dbReference>
<dbReference type="Pfam" id="PF00689">
    <property type="entry name" value="Cation_ATPase_C"/>
    <property type="match status" value="1"/>
</dbReference>
<dbReference type="Pfam" id="PF00690">
    <property type="entry name" value="Cation_ATPase_N"/>
    <property type="match status" value="1"/>
</dbReference>
<dbReference type="Pfam" id="PF00122">
    <property type="entry name" value="E1-E2_ATPase"/>
    <property type="match status" value="1"/>
</dbReference>
<dbReference type="Pfam" id="PF00702">
    <property type="entry name" value="Hydrolase"/>
    <property type="match status" value="1"/>
</dbReference>
<dbReference type="PRINTS" id="PR00119">
    <property type="entry name" value="CATATPASE"/>
</dbReference>
<dbReference type="PRINTS" id="PR00120">
    <property type="entry name" value="HATPASE"/>
</dbReference>
<dbReference type="SFLD" id="SFLDS00003">
    <property type="entry name" value="Haloacid_Dehalogenase"/>
    <property type="match status" value="1"/>
</dbReference>
<dbReference type="SFLD" id="SFLDF00027">
    <property type="entry name" value="p-type_atpase"/>
    <property type="match status" value="1"/>
</dbReference>
<dbReference type="SMART" id="SM00831">
    <property type="entry name" value="Cation_ATPase_N"/>
    <property type="match status" value="1"/>
</dbReference>
<dbReference type="SUPFAM" id="SSF81653">
    <property type="entry name" value="Calcium ATPase, transduction domain A"/>
    <property type="match status" value="1"/>
</dbReference>
<dbReference type="SUPFAM" id="SSF81665">
    <property type="entry name" value="Calcium ATPase, transmembrane domain M"/>
    <property type="match status" value="1"/>
</dbReference>
<dbReference type="SUPFAM" id="SSF56784">
    <property type="entry name" value="HAD-like"/>
    <property type="match status" value="1"/>
</dbReference>
<dbReference type="SUPFAM" id="SSF81660">
    <property type="entry name" value="Metal cation-transporting ATPase, ATP-binding domain N"/>
    <property type="match status" value="1"/>
</dbReference>
<dbReference type="PROSITE" id="PS00154">
    <property type="entry name" value="ATPASE_E1_E2"/>
    <property type="match status" value="1"/>
</dbReference>
<sequence>MESYLNENFDVKAKHSSEEVLEKWRNLCGVVKNPKRRFRFTANLSKRYEAAAMRRTNQEKLRIAVLVSKAAFQFISGVSPSDYTVPEDVKAAGFEICADELGSIVESHDVKKLKFHGGVDGLAGKLKASPTDGLSTEAAQLSQRQELFGINKFAESEMRGFWVFVWEALQDMTLMILGVCAFVSLIVGIATEGWPKGSHDGLGIAASILLVVFVTATSDYRQSLQFRDLDKEKKKITVQVTRNGFRQKLSIYDLLPGDIVHLAIGDQVPADGLFLSGFSVVIDESSLTGESEPVMVNAQNPFLMSGTKVQDGSCKMMITTVGMRTQWGKLMATLTEGGDDETPLQVKLNGVATIIGKIGLFFAVVTFAVLVQGMFMRKLSTGTHWVWSGDEALELLEYFAIAVTIVVVAVPEGLPLAVTLSLAFAMKKMMNDKALVRHLAACETMGSATTICSDKTGTLTTNHMTVVKSCICMNVQDVANKGSSLQSEIPESAVKLLIQSIFNNTGGEVVVNKHGKTELLGTPTETAILELGLSLGGKFQEERKSYKVIKVEPFNSTKKRMGVVIELPEGGRMRAHTKGASEIVLAACDKVVNSSGEVVPLDEESIKYLNVTINEFANEALRTLCLAYMDIEGGFSPDDAIPASGFTCVGIVGIKDPVRPGVKESVELCRRAGITVRMVTGDNINTAKAIARECGILTDDGIAIEGPVFREKNQEELLELIPKIQVMARSSPMDKHTLVKQLRTTFDEVVAVTGDGTNDAPALHEADIGLAMGIAGTEVAKESADVIILDDNFSTIVTVAKWGRSVYINIQKFVQFQLTVNVVALVVNFSSACLTGSAPLTAVQLLWVNMIMDTLGALALATEPPNDELMKRLPVGRRGNFITNAMWRNILGQAVYQFIVIWILQAKGKAMFGLDGPDSTLMLNTLIFNCFVFCQVFNEISSREMEEIDVFKGILDNYVFVVVIGATVFFQIIIIEFLGTFASTTPLTITQWIFSIFIGFLGMPIAAGLKTIPV</sequence>
<protein>
    <recommendedName>
        <fullName>Calcium-transporting ATPase 2, plasma membrane-type</fullName>
        <ecNumber>7.2.2.10</ecNumber>
    </recommendedName>
    <alternativeName>
        <fullName>Ca(2+)-ATPase isoform 2</fullName>
    </alternativeName>
</protein>
<feature type="chain" id="PRO_0000046411" description="Calcium-transporting ATPase 2, plasma membrane-type">
    <location>
        <begin position="1"/>
        <end position="1014"/>
    </location>
</feature>
<feature type="topological domain" description="Cytoplasmic" evidence="2">
    <location>
        <begin position="1"/>
        <end position="160"/>
    </location>
</feature>
<feature type="transmembrane region" description="Helical" evidence="2">
    <location>
        <begin position="161"/>
        <end position="181"/>
    </location>
</feature>
<feature type="topological domain" description="Lumenal" evidence="2">
    <location>
        <begin position="182"/>
        <end position="199"/>
    </location>
</feature>
<feature type="transmembrane region" description="Helical" evidence="2">
    <location>
        <begin position="200"/>
        <end position="220"/>
    </location>
</feature>
<feature type="topological domain" description="Cytoplasmic" evidence="2">
    <location>
        <begin position="221"/>
        <end position="348"/>
    </location>
</feature>
<feature type="transmembrane region" description="Helical" evidence="2">
    <location>
        <begin position="349"/>
        <end position="368"/>
    </location>
</feature>
<feature type="topological domain" description="Lumenal" evidence="2">
    <location>
        <begin position="369"/>
        <end position="398"/>
    </location>
</feature>
<feature type="transmembrane region" description="Helical" evidence="2">
    <location>
        <begin position="399"/>
        <end position="416"/>
    </location>
</feature>
<feature type="topological domain" description="Cytoplasmic" evidence="2">
    <location>
        <begin position="417"/>
        <end position="810"/>
    </location>
</feature>
<feature type="transmembrane region" description="Helical" evidence="2">
    <location>
        <begin position="811"/>
        <end position="829"/>
    </location>
</feature>
<feature type="topological domain" description="Lumenal" evidence="2">
    <location>
        <begin position="830"/>
        <end position="840"/>
    </location>
</feature>
<feature type="transmembrane region" description="Helical" evidence="2">
    <location>
        <begin position="841"/>
        <end position="861"/>
    </location>
</feature>
<feature type="topological domain" description="Cytoplasmic" evidence="2">
    <location>
        <begin position="862"/>
        <end position="881"/>
    </location>
</feature>
<feature type="transmembrane region" description="Helical" evidence="2">
    <location>
        <begin position="882"/>
        <end position="904"/>
    </location>
</feature>
<feature type="topological domain" description="Lumenal" evidence="2">
    <location>
        <begin position="905"/>
        <end position="916"/>
    </location>
</feature>
<feature type="transmembrane region" description="Helical" evidence="2">
    <location>
        <begin position="917"/>
        <end position="938"/>
    </location>
</feature>
<feature type="topological domain" description="Cytoplasmic" evidence="2">
    <location>
        <begin position="939"/>
        <end position="956"/>
    </location>
</feature>
<feature type="transmembrane region" description="Helical" evidence="2">
    <location>
        <begin position="957"/>
        <end position="978"/>
    </location>
</feature>
<feature type="topological domain" description="Lumenal" evidence="2">
    <location>
        <begin position="979"/>
        <end position="988"/>
    </location>
</feature>
<feature type="transmembrane region" description="Helical" evidence="2">
    <location>
        <begin position="989"/>
        <end position="1010"/>
    </location>
</feature>
<feature type="topological domain" description="Cytoplasmic" evidence="2">
    <location>
        <begin position="1011"/>
        <end position="1014"/>
    </location>
</feature>
<feature type="region of interest" description="Interaction with calmodulin">
    <location>
        <begin position="20"/>
        <end position="31"/>
    </location>
</feature>
<feature type="active site" description="4-aspartylphosphate intermediate" evidence="1">
    <location>
        <position position="454"/>
    </location>
</feature>
<feature type="binding site" evidence="1">
    <location>
        <position position="755"/>
    </location>
    <ligand>
        <name>Mg(2+)</name>
        <dbReference type="ChEBI" id="CHEBI:18420"/>
    </ligand>
</feature>
<feature type="binding site" evidence="1">
    <location>
        <position position="759"/>
    </location>
    <ligand>
        <name>Mg(2+)</name>
        <dbReference type="ChEBI" id="CHEBI:18420"/>
    </ligand>
</feature>
<feature type="modified residue" description="N-acetylmethionine" evidence="5">
    <location>
        <position position="1"/>
    </location>
</feature>
<feature type="modified residue" description="Phosphoserine; by CPK1" evidence="3">
    <location>
        <position position="45"/>
    </location>
</feature>
<feature type="helix" evidence="6">
    <location>
        <begin position="22"/>
        <end position="31"/>
    </location>
</feature>
<feature type="turn" evidence="6">
    <location>
        <begin position="34"/>
        <end position="36"/>
    </location>
</feature>
<evidence type="ECO:0000250" key="1"/>
<evidence type="ECO:0000255" key="2"/>
<evidence type="ECO:0000269" key="3">
    <source>
    </source>
</evidence>
<evidence type="ECO:0000305" key="4"/>
<evidence type="ECO:0007744" key="5">
    <source>
    </source>
</evidence>
<evidence type="ECO:0007829" key="6">
    <source>
        <dbReference type="PDB" id="2M7E"/>
    </source>
</evidence>
<proteinExistence type="evidence at protein level"/>